<accession>Q5NVM4</accession>
<organism>
    <name type="scientific">Pongo abelii</name>
    <name type="common">Sumatran orangutan</name>
    <name type="synonym">Pongo pygmaeus abelii</name>
    <dbReference type="NCBI Taxonomy" id="9601"/>
    <lineage>
        <taxon>Eukaryota</taxon>
        <taxon>Metazoa</taxon>
        <taxon>Chordata</taxon>
        <taxon>Craniata</taxon>
        <taxon>Vertebrata</taxon>
        <taxon>Euteleostomi</taxon>
        <taxon>Mammalia</taxon>
        <taxon>Eutheria</taxon>
        <taxon>Euarchontoglires</taxon>
        <taxon>Primates</taxon>
        <taxon>Haplorrhini</taxon>
        <taxon>Catarrhini</taxon>
        <taxon>Hominidae</taxon>
        <taxon>Pongo</taxon>
    </lineage>
</organism>
<dbReference type="EC" id="5.3.99.3" evidence="1"/>
<dbReference type="EMBL" id="CR925997">
    <property type="protein sequence ID" value="CAI29639.1"/>
    <property type="molecule type" value="mRNA"/>
</dbReference>
<dbReference type="RefSeq" id="NP_001127087.1">
    <property type="nucleotide sequence ID" value="NM_001133615.1"/>
</dbReference>
<dbReference type="BMRB" id="Q5NVM4"/>
<dbReference type="SMR" id="Q5NVM4"/>
<dbReference type="FunCoup" id="Q5NVM4">
    <property type="interactions" value="3086"/>
</dbReference>
<dbReference type="STRING" id="9601.ENSPPYP00000005319"/>
<dbReference type="Ensembl" id="ENSPPYT00000005528.2">
    <property type="protein sequence ID" value="ENSPPYP00000005319.1"/>
    <property type="gene ID" value="ENSPPYG00000004669.2"/>
</dbReference>
<dbReference type="GeneID" id="100174118"/>
<dbReference type="KEGG" id="pon:100174118"/>
<dbReference type="CTD" id="10728"/>
<dbReference type="eggNOG" id="KOG3158">
    <property type="taxonomic scope" value="Eukaryota"/>
</dbReference>
<dbReference type="GeneTree" id="ENSGT00940000154256"/>
<dbReference type="HOGENOM" id="CLU_078883_1_2_1"/>
<dbReference type="InParanoid" id="Q5NVM4"/>
<dbReference type="OrthoDB" id="1564555at2759"/>
<dbReference type="TreeFam" id="TF315077"/>
<dbReference type="UniPathway" id="UPA00662"/>
<dbReference type="Proteomes" id="UP000001595">
    <property type="component" value="Chromosome 12"/>
</dbReference>
<dbReference type="GO" id="GO:0005829">
    <property type="term" value="C:cytosol"/>
    <property type="evidence" value="ECO:0007669"/>
    <property type="project" value="TreeGrafter"/>
</dbReference>
<dbReference type="GO" id="GO:0005634">
    <property type="term" value="C:nucleus"/>
    <property type="evidence" value="ECO:0007669"/>
    <property type="project" value="TreeGrafter"/>
</dbReference>
<dbReference type="GO" id="GO:0051879">
    <property type="term" value="F:Hsp90 protein binding"/>
    <property type="evidence" value="ECO:0007669"/>
    <property type="project" value="InterPro"/>
</dbReference>
<dbReference type="GO" id="GO:0050220">
    <property type="term" value="F:prostaglandin-E synthase activity"/>
    <property type="evidence" value="ECO:0007669"/>
    <property type="project" value="UniProtKB-EC"/>
</dbReference>
<dbReference type="GO" id="GO:0051087">
    <property type="term" value="F:protein-folding chaperone binding"/>
    <property type="evidence" value="ECO:0007669"/>
    <property type="project" value="TreeGrafter"/>
</dbReference>
<dbReference type="GO" id="GO:0051131">
    <property type="term" value="P:chaperone-mediated protein complex assembly"/>
    <property type="evidence" value="ECO:0007669"/>
    <property type="project" value="TreeGrafter"/>
</dbReference>
<dbReference type="GO" id="GO:0001516">
    <property type="term" value="P:prostaglandin biosynthetic process"/>
    <property type="evidence" value="ECO:0007669"/>
    <property type="project" value="UniProtKB-UniPathway"/>
</dbReference>
<dbReference type="GO" id="GO:0006457">
    <property type="term" value="P:protein folding"/>
    <property type="evidence" value="ECO:0007669"/>
    <property type="project" value="TreeGrafter"/>
</dbReference>
<dbReference type="GO" id="GO:1905323">
    <property type="term" value="P:telomerase holoenzyme complex assembly"/>
    <property type="evidence" value="ECO:0007669"/>
    <property type="project" value="TreeGrafter"/>
</dbReference>
<dbReference type="GO" id="GO:0007004">
    <property type="term" value="P:telomere maintenance via telomerase"/>
    <property type="evidence" value="ECO:0007669"/>
    <property type="project" value="TreeGrafter"/>
</dbReference>
<dbReference type="CDD" id="cd00237">
    <property type="entry name" value="p23"/>
    <property type="match status" value="1"/>
</dbReference>
<dbReference type="FunFam" id="2.60.40.790:FF:000003">
    <property type="entry name" value="prostaglandin E synthase 3"/>
    <property type="match status" value="1"/>
</dbReference>
<dbReference type="Gene3D" id="2.60.40.790">
    <property type="match status" value="1"/>
</dbReference>
<dbReference type="InterPro" id="IPR007052">
    <property type="entry name" value="CS_dom"/>
</dbReference>
<dbReference type="InterPro" id="IPR008978">
    <property type="entry name" value="HSP20-like_chaperone"/>
</dbReference>
<dbReference type="InterPro" id="IPR045250">
    <property type="entry name" value="p23-like"/>
</dbReference>
<dbReference type="PANTHER" id="PTHR22932:SF3">
    <property type="entry name" value="PROSTAGLANDIN E SYNTHASE 3"/>
    <property type="match status" value="1"/>
</dbReference>
<dbReference type="PANTHER" id="PTHR22932">
    <property type="entry name" value="TELOMERASE-BINDING PROTEIN P23 HSP90 CO-CHAPERONE"/>
    <property type="match status" value="1"/>
</dbReference>
<dbReference type="Pfam" id="PF04969">
    <property type="entry name" value="CS"/>
    <property type="match status" value="1"/>
</dbReference>
<dbReference type="SUPFAM" id="SSF49764">
    <property type="entry name" value="HSP20-like chaperones"/>
    <property type="match status" value="1"/>
</dbReference>
<dbReference type="PROSITE" id="PS51203">
    <property type="entry name" value="CS"/>
    <property type="match status" value="1"/>
</dbReference>
<keyword id="KW-0007">Acetylation</keyword>
<keyword id="KW-0963">Cytoplasm</keyword>
<keyword id="KW-0275">Fatty acid biosynthesis</keyword>
<keyword id="KW-0276">Fatty acid metabolism</keyword>
<keyword id="KW-0413">Isomerase</keyword>
<keyword id="KW-1017">Isopeptide bond</keyword>
<keyword id="KW-0444">Lipid biosynthesis</keyword>
<keyword id="KW-0443">Lipid metabolism</keyword>
<keyword id="KW-0597">Phosphoprotein</keyword>
<keyword id="KW-0643">Prostaglandin biosynthesis</keyword>
<keyword id="KW-0644">Prostaglandin metabolism</keyword>
<keyword id="KW-1185">Reference proteome</keyword>
<keyword id="KW-0832">Ubl conjugation</keyword>
<gene>
    <name type="primary">PTGES3</name>
</gene>
<reference key="1">
    <citation type="submission" date="2004-11" db="EMBL/GenBank/DDBJ databases">
        <authorList>
            <consortium name="The German cDNA consortium"/>
        </authorList>
    </citation>
    <scope>NUCLEOTIDE SEQUENCE [LARGE SCALE MRNA]</scope>
    <source>
        <tissue>Brain cortex</tissue>
    </source>
</reference>
<proteinExistence type="evidence at transcript level"/>
<protein>
    <recommendedName>
        <fullName>Prostaglandin E synthase 3</fullName>
        <ecNumber evidence="1">5.3.99.3</ecNumber>
    </recommendedName>
    <alternativeName>
        <fullName>Cytosolic prostaglandin E2 synthase</fullName>
        <shortName>cPGES</shortName>
    </alternativeName>
</protein>
<comment type="function">
    <text evidence="1">Cytosolic prostaglandin synthase that catalyzes the oxidoreduction of prostaglandin endoperoxide H2 (PGH2) to prostaglandin E2 (PGE2). Molecular chaperone that localizes to genomic response elements in a hormone-dependent manner and disrupts receptor-mediated transcriptional activation, by promoting disassembly of transcriptional regulatory complexes. Facilitates HIF alpha proteins hydroxylation via interaction with EGLN1/PHD2, leading to recruit EGLN1/PHD2 to the HSP90 pathway.</text>
</comment>
<comment type="catalytic activity">
    <reaction evidence="1">
        <text>prostaglandin H2 = prostaglandin E2</text>
        <dbReference type="Rhea" id="RHEA:12893"/>
        <dbReference type="ChEBI" id="CHEBI:57405"/>
        <dbReference type="ChEBI" id="CHEBI:606564"/>
        <dbReference type="EC" id="5.3.99.3"/>
    </reaction>
</comment>
<comment type="pathway">
    <text evidence="1">Lipid metabolism; prostaglandin biosynthesis.</text>
</comment>
<comment type="subunit">
    <text evidence="1">Probably forms a complex composed of chaperones HSP90 and HSP70, co-chaperones STIP1/HOP, CDC37, PPP5C, PTGES3/p23, TSC1 and client protein TSC2. Binds to the progesterone receptor. Interacts with TERT; the interaction, together with HSP90AA1, is required for correct assembly and stabilization of the telomerase holoenzyme complex. Interacts (via PXLE motif) with EGLN1/PHD2, recruiting EGLN1/PHD2 to the HSP90 pathway to facilitate HIF alpha proteins hydroxylation. Interacts with HSP90AA1, FLCN, FNIP1 and FNIP2.</text>
</comment>
<comment type="subcellular location">
    <subcellularLocation>
        <location evidence="2">Cytoplasm</location>
    </subcellularLocation>
</comment>
<comment type="PTM">
    <text evidence="1">Proteolytically cleaved by caspase-7 (CASP7) in response to apoptosis, leading to its inactivation.</text>
</comment>
<comment type="similarity">
    <text evidence="6">Belongs to the p23/wos2 family.</text>
</comment>
<feature type="chain" id="PRO_0000288780" description="Prostaglandin E synthase 3">
    <location>
        <begin position="1"/>
        <end position="160"/>
    </location>
</feature>
<feature type="domain" description="CS" evidence="4">
    <location>
        <begin position="1"/>
        <end position="90"/>
    </location>
</feature>
<feature type="region of interest" description="Disordered" evidence="5">
    <location>
        <begin position="124"/>
        <end position="160"/>
    </location>
</feature>
<feature type="short sequence motif" description="PXLE motif" evidence="1">
    <location>
        <begin position="157"/>
        <end position="160"/>
    </location>
</feature>
<feature type="compositionally biased region" description="Acidic residues" evidence="5">
    <location>
        <begin position="132"/>
        <end position="153"/>
    </location>
</feature>
<feature type="site" description="Cleavage; by caspase-7" evidence="1">
    <location>
        <begin position="142"/>
        <end position="143"/>
    </location>
</feature>
<feature type="modified residue" description="N6-acetyllysine" evidence="1">
    <location>
        <position position="33"/>
    </location>
</feature>
<feature type="modified residue" description="Phosphoserine" evidence="1">
    <location>
        <position position="44"/>
    </location>
</feature>
<feature type="modified residue" description="Phosphoserine" evidence="1">
    <location>
        <position position="85"/>
    </location>
</feature>
<feature type="modified residue" description="Phosphoserine" evidence="3">
    <location>
        <position position="100"/>
    </location>
</feature>
<feature type="modified residue" description="Phosphoserine" evidence="1">
    <location>
        <position position="113"/>
    </location>
</feature>
<feature type="modified residue" description="Phosphoserine" evidence="1">
    <location>
        <position position="118"/>
    </location>
</feature>
<feature type="modified residue" description="Phosphoserine" evidence="1">
    <location>
        <position position="148"/>
    </location>
</feature>
<feature type="modified residue" description="Phosphoserine" evidence="1">
    <location>
        <position position="151"/>
    </location>
</feature>
<feature type="cross-link" description="Glycyl lysine isopeptide (Lys-Gly) (interchain with G-Cter in SUMO2)" evidence="1">
    <location>
        <position position="35"/>
    </location>
</feature>
<feature type="cross-link" description="Glycyl lysine isopeptide (Lys-Gly) (interchain with G-Cter in SUMO2)" evidence="1">
    <location>
        <position position="65"/>
    </location>
</feature>
<evidence type="ECO:0000250" key="1">
    <source>
        <dbReference type="UniProtKB" id="Q15185"/>
    </source>
</evidence>
<evidence type="ECO:0000250" key="2">
    <source>
        <dbReference type="UniProtKB" id="Q3ZBF7"/>
    </source>
</evidence>
<evidence type="ECO:0000250" key="3">
    <source>
        <dbReference type="UniProtKB" id="Q9R0Q7"/>
    </source>
</evidence>
<evidence type="ECO:0000255" key="4">
    <source>
        <dbReference type="PROSITE-ProRule" id="PRU00547"/>
    </source>
</evidence>
<evidence type="ECO:0000256" key="5">
    <source>
        <dbReference type="SAM" id="MobiDB-lite"/>
    </source>
</evidence>
<evidence type="ECO:0000305" key="6"/>
<sequence length="160" mass="18697">MQPASAKWYDRRDYVFIEFCVEDSKDVNVNFEKSKLTFSCLGGSDNFKHLNEIDLFHCIDPNDSKHKRTDRSILCCLRKGESGQSWPRLTKERAKLNWLSVDFNNWKDWEDDSDEDMSNFDRFSEMMNNMGGDEDVDLPEVDGADDDSQDSDDEKMPDLE</sequence>
<name>TEBP_PONAB</name>